<dbReference type="EC" id="6.1.1.7" evidence="1"/>
<dbReference type="EMBL" id="AM286280">
    <property type="protein sequence ID" value="CAL09112.1"/>
    <property type="molecule type" value="Genomic_DNA"/>
</dbReference>
<dbReference type="RefSeq" id="WP_011242268.1">
    <property type="nucleotide sequence ID" value="NC_008245.1"/>
</dbReference>
<dbReference type="SMR" id="Q14HB9"/>
<dbReference type="KEGG" id="ftf:FTF1096c"/>
<dbReference type="HOGENOM" id="CLU_004485_1_1_6"/>
<dbReference type="GO" id="GO:0005829">
    <property type="term" value="C:cytosol"/>
    <property type="evidence" value="ECO:0007669"/>
    <property type="project" value="TreeGrafter"/>
</dbReference>
<dbReference type="GO" id="GO:0004813">
    <property type="term" value="F:alanine-tRNA ligase activity"/>
    <property type="evidence" value="ECO:0007669"/>
    <property type="project" value="UniProtKB-UniRule"/>
</dbReference>
<dbReference type="GO" id="GO:0002161">
    <property type="term" value="F:aminoacyl-tRNA deacylase activity"/>
    <property type="evidence" value="ECO:0007669"/>
    <property type="project" value="TreeGrafter"/>
</dbReference>
<dbReference type="GO" id="GO:0005524">
    <property type="term" value="F:ATP binding"/>
    <property type="evidence" value="ECO:0007669"/>
    <property type="project" value="UniProtKB-UniRule"/>
</dbReference>
<dbReference type="GO" id="GO:0000049">
    <property type="term" value="F:tRNA binding"/>
    <property type="evidence" value="ECO:0007669"/>
    <property type="project" value="UniProtKB-KW"/>
</dbReference>
<dbReference type="GO" id="GO:0008270">
    <property type="term" value="F:zinc ion binding"/>
    <property type="evidence" value="ECO:0007669"/>
    <property type="project" value="UniProtKB-UniRule"/>
</dbReference>
<dbReference type="GO" id="GO:0006419">
    <property type="term" value="P:alanyl-tRNA aminoacylation"/>
    <property type="evidence" value="ECO:0007669"/>
    <property type="project" value="UniProtKB-UniRule"/>
</dbReference>
<dbReference type="GO" id="GO:0045892">
    <property type="term" value="P:negative regulation of DNA-templated transcription"/>
    <property type="evidence" value="ECO:0007669"/>
    <property type="project" value="TreeGrafter"/>
</dbReference>
<dbReference type="CDD" id="cd00673">
    <property type="entry name" value="AlaRS_core"/>
    <property type="match status" value="1"/>
</dbReference>
<dbReference type="FunFam" id="2.40.30.130:FF:000001">
    <property type="entry name" value="Alanine--tRNA ligase"/>
    <property type="match status" value="1"/>
</dbReference>
<dbReference type="FunFam" id="3.10.310.40:FF:000001">
    <property type="entry name" value="Alanine--tRNA ligase"/>
    <property type="match status" value="1"/>
</dbReference>
<dbReference type="FunFam" id="3.30.54.20:FF:000001">
    <property type="entry name" value="Alanine--tRNA ligase"/>
    <property type="match status" value="1"/>
</dbReference>
<dbReference type="FunFam" id="3.30.930.10:FF:000004">
    <property type="entry name" value="Alanine--tRNA ligase"/>
    <property type="match status" value="1"/>
</dbReference>
<dbReference type="FunFam" id="3.30.980.10:FF:000004">
    <property type="entry name" value="Alanine--tRNA ligase, cytoplasmic"/>
    <property type="match status" value="1"/>
</dbReference>
<dbReference type="Gene3D" id="2.40.30.130">
    <property type="match status" value="1"/>
</dbReference>
<dbReference type="Gene3D" id="3.10.310.40">
    <property type="match status" value="1"/>
</dbReference>
<dbReference type="Gene3D" id="3.30.54.20">
    <property type="match status" value="1"/>
</dbReference>
<dbReference type="Gene3D" id="6.10.250.550">
    <property type="match status" value="1"/>
</dbReference>
<dbReference type="Gene3D" id="3.30.930.10">
    <property type="entry name" value="Bira Bifunctional Protein, Domain 2"/>
    <property type="match status" value="1"/>
</dbReference>
<dbReference type="Gene3D" id="3.30.980.10">
    <property type="entry name" value="Threonyl-trna Synthetase, Chain A, domain 2"/>
    <property type="match status" value="1"/>
</dbReference>
<dbReference type="HAMAP" id="MF_00036_B">
    <property type="entry name" value="Ala_tRNA_synth_B"/>
    <property type="match status" value="1"/>
</dbReference>
<dbReference type="InterPro" id="IPR045864">
    <property type="entry name" value="aa-tRNA-synth_II/BPL/LPL"/>
</dbReference>
<dbReference type="InterPro" id="IPR002318">
    <property type="entry name" value="Ala-tRNA-lgiase_IIc"/>
</dbReference>
<dbReference type="InterPro" id="IPR018162">
    <property type="entry name" value="Ala-tRNA-ligase_IIc_anticod-bd"/>
</dbReference>
<dbReference type="InterPro" id="IPR018165">
    <property type="entry name" value="Ala-tRNA-synth_IIc_core"/>
</dbReference>
<dbReference type="InterPro" id="IPR018164">
    <property type="entry name" value="Ala-tRNA-synth_IIc_N"/>
</dbReference>
<dbReference type="InterPro" id="IPR050058">
    <property type="entry name" value="Ala-tRNA_ligase"/>
</dbReference>
<dbReference type="InterPro" id="IPR023033">
    <property type="entry name" value="Ala_tRNA_ligase_euk/bac"/>
</dbReference>
<dbReference type="InterPro" id="IPR003156">
    <property type="entry name" value="DHHA1_dom"/>
</dbReference>
<dbReference type="InterPro" id="IPR018163">
    <property type="entry name" value="Thr/Ala-tRNA-synth_IIc_edit"/>
</dbReference>
<dbReference type="InterPro" id="IPR009000">
    <property type="entry name" value="Transl_B-barrel_sf"/>
</dbReference>
<dbReference type="InterPro" id="IPR012947">
    <property type="entry name" value="tRNA_SAD"/>
</dbReference>
<dbReference type="NCBIfam" id="TIGR00344">
    <property type="entry name" value="alaS"/>
    <property type="match status" value="1"/>
</dbReference>
<dbReference type="PANTHER" id="PTHR11777:SF9">
    <property type="entry name" value="ALANINE--TRNA LIGASE, CYTOPLASMIC"/>
    <property type="match status" value="1"/>
</dbReference>
<dbReference type="PANTHER" id="PTHR11777">
    <property type="entry name" value="ALANYL-TRNA SYNTHETASE"/>
    <property type="match status" value="1"/>
</dbReference>
<dbReference type="Pfam" id="PF02272">
    <property type="entry name" value="DHHA1"/>
    <property type="match status" value="1"/>
</dbReference>
<dbReference type="Pfam" id="PF01411">
    <property type="entry name" value="tRNA-synt_2c"/>
    <property type="match status" value="1"/>
</dbReference>
<dbReference type="Pfam" id="PF07973">
    <property type="entry name" value="tRNA_SAD"/>
    <property type="match status" value="1"/>
</dbReference>
<dbReference type="PRINTS" id="PR00980">
    <property type="entry name" value="TRNASYNTHALA"/>
</dbReference>
<dbReference type="SMART" id="SM00863">
    <property type="entry name" value="tRNA_SAD"/>
    <property type="match status" value="1"/>
</dbReference>
<dbReference type="SUPFAM" id="SSF55681">
    <property type="entry name" value="Class II aaRS and biotin synthetases"/>
    <property type="match status" value="1"/>
</dbReference>
<dbReference type="SUPFAM" id="SSF101353">
    <property type="entry name" value="Putative anticodon-binding domain of alanyl-tRNA synthetase (AlaRS)"/>
    <property type="match status" value="1"/>
</dbReference>
<dbReference type="SUPFAM" id="SSF55186">
    <property type="entry name" value="ThrRS/AlaRS common domain"/>
    <property type="match status" value="1"/>
</dbReference>
<dbReference type="SUPFAM" id="SSF50447">
    <property type="entry name" value="Translation proteins"/>
    <property type="match status" value="1"/>
</dbReference>
<dbReference type="PROSITE" id="PS50860">
    <property type="entry name" value="AA_TRNA_LIGASE_II_ALA"/>
    <property type="match status" value="1"/>
</dbReference>
<keyword id="KW-0030">Aminoacyl-tRNA synthetase</keyword>
<keyword id="KW-0067">ATP-binding</keyword>
<keyword id="KW-0963">Cytoplasm</keyword>
<keyword id="KW-0436">Ligase</keyword>
<keyword id="KW-0479">Metal-binding</keyword>
<keyword id="KW-0547">Nucleotide-binding</keyword>
<keyword id="KW-0648">Protein biosynthesis</keyword>
<keyword id="KW-0694">RNA-binding</keyword>
<keyword id="KW-0820">tRNA-binding</keyword>
<keyword id="KW-0862">Zinc</keyword>
<sequence>MITTKELRNKFINYFESKNHSHQPSSSLIPFGDDTLLFTNAGMVQFKDVFLGIEKKDFSRAVTVQKCLRAGGKHNDLDNVGYTARHHTFFEMLGNFSFGDYFKKEAISFAWEFLTKEIKLPVEKLWVTIYASDDEAFDVWHKHIGLAKERIIRIDSSDNFWSMGDTGPCGPCTEIFYDHGEDVAGGLPGTPEQDGDRYIEIWNIVFMQYNRHADGSTTDLPKPSVDTGMGLERISAVLQNVHSNYEIDLFQALIKKAQQVTHAKDINSPSLKVIADHIRACAFLIADGVLPANEGRGYVLRRIIRRAIRHGNKVGAKEIFFYKLVAELVSQMGEVYSQLIDKRELIEKTLIKEEELFLKTIENGIKIFDAEIENLKDNTISGEVAFKLYDTYGFPFDLTADMAREKGLKVDEQAFLAQMQIQKQRSKEAGKFNVDYNSLINSQVKSEFRGYSTLIEDAKVLEIYQDGQLVASTSEQVSAVVVLDKTPFYAESGGQVGDKGILEGIGFEFVVEDVQKSGEAILHIGKLVKGHLNLNDELTARVSDKPRLATAANHSATHLLHKALKLVLGGHAEQKGSLVDENRLRFDFTHDKAISRSKIEQIELLVNQQIRANYPVTTIETSQQKAKSLGAEALFGEKYGDIVRVISMGDFSIELCGGTHVAYTGDIGLFKVTSEGSIASGVRRIEAVTADKAIRHTFTNENKIIAIKDSLKANDTNLIDKIKSMLEQIKNQEKQIAKLKKELLSGSSNDIKETNIGDIKVVVANVDGVDVKTLRNKIDDYKSKNTKVIAVLTTTNADKVQFVIGVSNALTTLIKAGDIAKELSSHIDGKGGGRADMAQGGGNNSANIDQALSQVEKFILNNIKE</sequence>
<reference key="1">
    <citation type="journal article" date="2007" name="PLoS ONE">
        <title>Genome sequencing shows that European isolates of Francisella tularensis subspecies tularensis are almost identical to US laboratory strain Schu S4.</title>
        <authorList>
            <person name="Chaudhuri R.R."/>
            <person name="Ren C.-P."/>
            <person name="Desmond L."/>
            <person name="Vincent G.A."/>
            <person name="Silman N.J."/>
            <person name="Brehm J.K."/>
            <person name="Elmore M.J."/>
            <person name="Hudson M.J."/>
            <person name="Forsman M."/>
            <person name="Isherwood K.E."/>
            <person name="Gurycova D."/>
            <person name="Minton N.P."/>
            <person name="Titball R.W."/>
            <person name="Pallen M.J."/>
            <person name="Vipond R."/>
        </authorList>
    </citation>
    <scope>NUCLEOTIDE SEQUENCE [LARGE SCALE GENOMIC DNA]</scope>
    <source>
        <strain>FSC 198</strain>
    </source>
</reference>
<organism>
    <name type="scientific">Francisella tularensis subsp. tularensis (strain FSC 198)</name>
    <dbReference type="NCBI Taxonomy" id="393115"/>
    <lineage>
        <taxon>Bacteria</taxon>
        <taxon>Pseudomonadati</taxon>
        <taxon>Pseudomonadota</taxon>
        <taxon>Gammaproteobacteria</taxon>
        <taxon>Thiotrichales</taxon>
        <taxon>Francisellaceae</taxon>
        <taxon>Francisella</taxon>
    </lineage>
</organism>
<accession>Q14HB9</accession>
<gene>
    <name evidence="1" type="primary">alaS</name>
    <name type="ordered locus">FTF1096c</name>
</gene>
<evidence type="ECO:0000255" key="1">
    <source>
        <dbReference type="HAMAP-Rule" id="MF_00036"/>
    </source>
</evidence>
<comment type="function">
    <text evidence="1">Catalyzes the attachment of alanine to tRNA(Ala) in a two-step reaction: alanine is first activated by ATP to form Ala-AMP and then transferred to the acceptor end of tRNA(Ala). Also edits incorrectly charged Ser-tRNA(Ala) and Gly-tRNA(Ala) via its editing domain.</text>
</comment>
<comment type="catalytic activity">
    <reaction evidence="1">
        <text>tRNA(Ala) + L-alanine + ATP = L-alanyl-tRNA(Ala) + AMP + diphosphate</text>
        <dbReference type="Rhea" id="RHEA:12540"/>
        <dbReference type="Rhea" id="RHEA-COMP:9657"/>
        <dbReference type="Rhea" id="RHEA-COMP:9923"/>
        <dbReference type="ChEBI" id="CHEBI:30616"/>
        <dbReference type="ChEBI" id="CHEBI:33019"/>
        <dbReference type="ChEBI" id="CHEBI:57972"/>
        <dbReference type="ChEBI" id="CHEBI:78442"/>
        <dbReference type="ChEBI" id="CHEBI:78497"/>
        <dbReference type="ChEBI" id="CHEBI:456215"/>
        <dbReference type="EC" id="6.1.1.7"/>
    </reaction>
</comment>
<comment type="cofactor">
    <cofactor evidence="1">
        <name>Zn(2+)</name>
        <dbReference type="ChEBI" id="CHEBI:29105"/>
    </cofactor>
    <text evidence="1">Binds 1 zinc ion per subunit.</text>
</comment>
<comment type="subcellular location">
    <subcellularLocation>
        <location evidence="1">Cytoplasm</location>
    </subcellularLocation>
</comment>
<comment type="domain">
    <text evidence="1">Consists of three domains; the N-terminal catalytic domain, the editing domain and the C-terminal C-Ala domain. The editing domain removes incorrectly charged amino acids, while the C-Ala domain, along with tRNA(Ala), serves as a bridge to cooperatively bring together the editing and aminoacylation centers thus stimulating deacylation of misacylated tRNAs.</text>
</comment>
<comment type="similarity">
    <text evidence="1">Belongs to the class-II aminoacyl-tRNA synthetase family.</text>
</comment>
<protein>
    <recommendedName>
        <fullName evidence="1">Alanine--tRNA ligase</fullName>
        <ecNumber evidence="1">6.1.1.7</ecNumber>
    </recommendedName>
    <alternativeName>
        <fullName evidence="1">Alanyl-tRNA synthetase</fullName>
        <shortName evidence="1">AlaRS</shortName>
    </alternativeName>
</protein>
<proteinExistence type="inferred from homology"/>
<name>SYA_FRAT1</name>
<feature type="chain" id="PRO_0000347615" description="Alanine--tRNA ligase">
    <location>
        <begin position="1"/>
        <end position="865"/>
    </location>
</feature>
<feature type="binding site" evidence="1">
    <location>
        <position position="554"/>
    </location>
    <ligand>
        <name>Zn(2+)</name>
        <dbReference type="ChEBI" id="CHEBI:29105"/>
    </ligand>
</feature>
<feature type="binding site" evidence="1">
    <location>
        <position position="558"/>
    </location>
    <ligand>
        <name>Zn(2+)</name>
        <dbReference type="ChEBI" id="CHEBI:29105"/>
    </ligand>
</feature>
<feature type="binding site" evidence="1">
    <location>
        <position position="656"/>
    </location>
    <ligand>
        <name>Zn(2+)</name>
        <dbReference type="ChEBI" id="CHEBI:29105"/>
    </ligand>
</feature>
<feature type="binding site" evidence="1">
    <location>
        <position position="660"/>
    </location>
    <ligand>
        <name>Zn(2+)</name>
        <dbReference type="ChEBI" id="CHEBI:29105"/>
    </ligand>
</feature>